<proteinExistence type="inferred from homology"/>
<protein>
    <recommendedName>
        <fullName evidence="1">Lon protease</fullName>
        <ecNumber evidence="1">3.4.21.53</ecNumber>
    </recommendedName>
    <alternativeName>
        <fullName evidence="1">ATP-dependent protease La</fullName>
    </alternativeName>
</protein>
<keyword id="KW-0067">ATP-binding</keyword>
<keyword id="KW-0963">Cytoplasm</keyword>
<keyword id="KW-0378">Hydrolase</keyword>
<keyword id="KW-0547">Nucleotide-binding</keyword>
<keyword id="KW-0645">Protease</keyword>
<keyword id="KW-1185">Reference proteome</keyword>
<keyword id="KW-0720">Serine protease</keyword>
<keyword id="KW-0346">Stress response</keyword>
<organism>
    <name type="scientific">Clostridioides difficile (strain 630)</name>
    <name type="common">Peptoclostridium difficile</name>
    <dbReference type="NCBI Taxonomy" id="272563"/>
    <lineage>
        <taxon>Bacteria</taxon>
        <taxon>Bacillati</taxon>
        <taxon>Bacillota</taxon>
        <taxon>Clostridia</taxon>
        <taxon>Peptostreptococcales</taxon>
        <taxon>Peptostreptococcaceae</taxon>
        <taxon>Clostridioides</taxon>
    </lineage>
</organism>
<sequence length="787" mass="89254">MEQNYTKIDHELPLIPLRGLAIFPYMILNFDIGREISLKALDQAMMDEELIFLTSQKEAEVDEPGEEDFYHVGTICKVKQMIKLPGDTVRVLVEGVSRGRVKKIEQEDGYFRAVIEEIVFDSDNLDSETEVEIEAFVRNVFDAFEEYINIGNRVSPEILISLADIEDVDRFIDTIAANIYLKSSQKQEILEEFDIRKRLELIYSILLEEIDILKIEKKITLRVKKQMNKVQKEYYLREQLKAIQKELGEEEDINSEADEYREKLKKIKAPKTTKEKIEKEIDKFSKISSMSPDVSVSRNYLDTIFSLPWNKETKDKLDITKAKDILDEDHYGLEKVKERILEYLAIRTLAKSLKGPIICLVGPPGTGKTSIVKSIARALNRKFVRISLGGVRDEAEIRGHRRTYVGSIPGRIINGVKEAQTKNPVFLFDEIDKMAADYKGDPASAMLEVLDPEQNKDFVDHYLEIPFDLSKILFVTTANSLGNIPRPLLDRMEVIEVSGYIEEEKLNIAKKYLLPKQIKEHALKENFIKIDDETLRSIINHYTREAGVRTLERTIGKICRKVAKKYVEDPTLEEVVINKSDLETYLGKDMFKYQLAEVNPQIGLVNGLAWTEVGGVTLEVEVNVLKGKGEIVLTGKLGDVMKESAKTGISYIRSIVDKFDIDPEFYKTNDIHIHIPEGAVPKDGPSAGITMALAVISALTKRPVPGNIAMTGEITLRGRVLAVGGVKEKLLAAHRAGITKVLIPKECEADLDEIPENVKEKMEFVLVEHMDEVLEQALLKSGENNEN</sequence>
<comment type="function">
    <text evidence="1">ATP-dependent serine protease that mediates the selective degradation of mutant and abnormal proteins as well as certain short-lived regulatory proteins. Required for cellular homeostasis and for survival from DNA damage and developmental changes induced by stress. Degrades polypeptides processively to yield small peptide fragments that are 5 to 10 amino acids long. Binds to DNA in a double-stranded, site-specific manner.</text>
</comment>
<comment type="catalytic activity">
    <reaction evidence="1">
        <text>Hydrolysis of proteins in presence of ATP.</text>
        <dbReference type="EC" id="3.4.21.53"/>
    </reaction>
</comment>
<comment type="subunit">
    <text evidence="1">Homohexamer. Organized in a ring with a central cavity.</text>
</comment>
<comment type="subcellular location">
    <subcellularLocation>
        <location evidence="1">Cytoplasm</location>
    </subcellularLocation>
</comment>
<comment type="induction">
    <text evidence="1">By heat shock.</text>
</comment>
<comment type="similarity">
    <text evidence="1">Belongs to the peptidase S16 family.</text>
</comment>
<accession>Q180E4</accession>
<gene>
    <name evidence="1" type="primary">lon</name>
    <name type="ordered locus">CD630_33010</name>
</gene>
<evidence type="ECO:0000255" key="1">
    <source>
        <dbReference type="HAMAP-Rule" id="MF_01973"/>
    </source>
</evidence>
<evidence type="ECO:0000255" key="2">
    <source>
        <dbReference type="PROSITE-ProRule" id="PRU01122"/>
    </source>
</evidence>
<evidence type="ECO:0000255" key="3">
    <source>
        <dbReference type="PROSITE-ProRule" id="PRU01123"/>
    </source>
</evidence>
<dbReference type="EC" id="3.4.21.53" evidence="1"/>
<dbReference type="EMBL" id="AM180355">
    <property type="protein sequence ID" value="CAJ70198.2"/>
    <property type="molecule type" value="Genomic_DNA"/>
</dbReference>
<dbReference type="RefSeq" id="WP_003435613.1">
    <property type="nucleotide sequence ID" value="NZ_JAUPES010000002.1"/>
</dbReference>
<dbReference type="RefSeq" id="YP_001089817.2">
    <property type="nucleotide sequence ID" value="NC_009089.1"/>
</dbReference>
<dbReference type="SMR" id="Q180E4"/>
<dbReference type="STRING" id="272563.CD630_33010"/>
<dbReference type="MEROPS" id="S16.001"/>
<dbReference type="EnsemblBacteria" id="CAJ70198">
    <property type="protein sequence ID" value="CAJ70198"/>
    <property type="gene ID" value="CD630_33010"/>
</dbReference>
<dbReference type="KEGG" id="cdf:CD630_33010"/>
<dbReference type="KEGG" id="pdc:CDIF630_03602"/>
<dbReference type="PATRIC" id="fig|272563.120.peg.3486"/>
<dbReference type="eggNOG" id="COG0466">
    <property type="taxonomic scope" value="Bacteria"/>
</dbReference>
<dbReference type="OrthoDB" id="9803599at2"/>
<dbReference type="PhylomeDB" id="Q180E4"/>
<dbReference type="BioCyc" id="PDIF272563:G12WB-3468-MONOMER"/>
<dbReference type="Proteomes" id="UP000001978">
    <property type="component" value="Chromosome"/>
</dbReference>
<dbReference type="GO" id="GO:0005737">
    <property type="term" value="C:cytoplasm"/>
    <property type="evidence" value="ECO:0007669"/>
    <property type="project" value="UniProtKB-SubCell"/>
</dbReference>
<dbReference type="GO" id="GO:0005524">
    <property type="term" value="F:ATP binding"/>
    <property type="evidence" value="ECO:0007669"/>
    <property type="project" value="UniProtKB-UniRule"/>
</dbReference>
<dbReference type="GO" id="GO:0016887">
    <property type="term" value="F:ATP hydrolysis activity"/>
    <property type="evidence" value="ECO:0007669"/>
    <property type="project" value="UniProtKB-UniRule"/>
</dbReference>
<dbReference type="GO" id="GO:0004176">
    <property type="term" value="F:ATP-dependent peptidase activity"/>
    <property type="evidence" value="ECO:0007669"/>
    <property type="project" value="UniProtKB-UniRule"/>
</dbReference>
<dbReference type="GO" id="GO:0043565">
    <property type="term" value="F:sequence-specific DNA binding"/>
    <property type="evidence" value="ECO:0007669"/>
    <property type="project" value="UniProtKB-UniRule"/>
</dbReference>
<dbReference type="GO" id="GO:0004252">
    <property type="term" value="F:serine-type endopeptidase activity"/>
    <property type="evidence" value="ECO:0007669"/>
    <property type="project" value="UniProtKB-UniRule"/>
</dbReference>
<dbReference type="GO" id="GO:0034605">
    <property type="term" value="P:cellular response to heat"/>
    <property type="evidence" value="ECO:0007669"/>
    <property type="project" value="UniProtKB-UniRule"/>
</dbReference>
<dbReference type="GO" id="GO:0006515">
    <property type="term" value="P:protein quality control for misfolded or incompletely synthesized proteins"/>
    <property type="evidence" value="ECO:0007669"/>
    <property type="project" value="UniProtKB-UniRule"/>
</dbReference>
<dbReference type="CDD" id="cd19500">
    <property type="entry name" value="RecA-like_Lon"/>
    <property type="match status" value="1"/>
</dbReference>
<dbReference type="FunFam" id="3.40.50.300:FF:000382">
    <property type="entry name" value="Lon protease homolog 2, peroxisomal"/>
    <property type="match status" value="1"/>
</dbReference>
<dbReference type="Gene3D" id="1.10.8.60">
    <property type="match status" value="1"/>
</dbReference>
<dbReference type="Gene3D" id="1.20.5.5270">
    <property type="match status" value="1"/>
</dbReference>
<dbReference type="Gene3D" id="1.20.58.1480">
    <property type="match status" value="1"/>
</dbReference>
<dbReference type="Gene3D" id="3.30.230.10">
    <property type="match status" value="1"/>
</dbReference>
<dbReference type="Gene3D" id="2.30.130.40">
    <property type="entry name" value="LON domain-like"/>
    <property type="match status" value="1"/>
</dbReference>
<dbReference type="Gene3D" id="3.40.50.300">
    <property type="entry name" value="P-loop containing nucleotide triphosphate hydrolases"/>
    <property type="match status" value="1"/>
</dbReference>
<dbReference type="HAMAP" id="MF_01973">
    <property type="entry name" value="lon_bact"/>
    <property type="match status" value="1"/>
</dbReference>
<dbReference type="InterPro" id="IPR003593">
    <property type="entry name" value="AAA+_ATPase"/>
</dbReference>
<dbReference type="InterPro" id="IPR003959">
    <property type="entry name" value="ATPase_AAA_core"/>
</dbReference>
<dbReference type="InterPro" id="IPR027543">
    <property type="entry name" value="Lon_bac"/>
</dbReference>
<dbReference type="InterPro" id="IPR004815">
    <property type="entry name" value="Lon_bac/euk-typ"/>
</dbReference>
<dbReference type="InterPro" id="IPR054594">
    <property type="entry name" value="Lon_lid"/>
</dbReference>
<dbReference type="InterPro" id="IPR008269">
    <property type="entry name" value="Lon_proteolytic"/>
</dbReference>
<dbReference type="InterPro" id="IPR027065">
    <property type="entry name" value="Lon_Prtase"/>
</dbReference>
<dbReference type="InterPro" id="IPR003111">
    <property type="entry name" value="Lon_prtase_N"/>
</dbReference>
<dbReference type="InterPro" id="IPR046336">
    <property type="entry name" value="Lon_prtase_N_sf"/>
</dbReference>
<dbReference type="InterPro" id="IPR027417">
    <property type="entry name" value="P-loop_NTPase"/>
</dbReference>
<dbReference type="InterPro" id="IPR008268">
    <property type="entry name" value="Peptidase_S16_AS"/>
</dbReference>
<dbReference type="InterPro" id="IPR015947">
    <property type="entry name" value="PUA-like_sf"/>
</dbReference>
<dbReference type="InterPro" id="IPR020568">
    <property type="entry name" value="Ribosomal_Su5_D2-typ_SF"/>
</dbReference>
<dbReference type="InterPro" id="IPR014721">
    <property type="entry name" value="Ribsml_uS5_D2-typ_fold_subgr"/>
</dbReference>
<dbReference type="NCBIfam" id="TIGR00763">
    <property type="entry name" value="lon"/>
    <property type="match status" value="1"/>
</dbReference>
<dbReference type="NCBIfam" id="NF008053">
    <property type="entry name" value="PRK10787.1"/>
    <property type="match status" value="1"/>
</dbReference>
<dbReference type="PANTHER" id="PTHR10046">
    <property type="entry name" value="ATP DEPENDENT LON PROTEASE FAMILY MEMBER"/>
    <property type="match status" value="1"/>
</dbReference>
<dbReference type="Pfam" id="PF00004">
    <property type="entry name" value="AAA"/>
    <property type="match status" value="1"/>
</dbReference>
<dbReference type="Pfam" id="PF05362">
    <property type="entry name" value="Lon_C"/>
    <property type="match status" value="1"/>
</dbReference>
<dbReference type="Pfam" id="PF22667">
    <property type="entry name" value="Lon_lid"/>
    <property type="match status" value="1"/>
</dbReference>
<dbReference type="Pfam" id="PF02190">
    <property type="entry name" value="LON_substr_bdg"/>
    <property type="match status" value="1"/>
</dbReference>
<dbReference type="PIRSF" id="PIRSF001174">
    <property type="entry name" value="Lon_proteas"/>
    <property type="match status" value="1"/>
</dbReference>
<dbReference type="PRINTS" id="PR00830">
    <property type="entry name" value="ENDOLAPTASE"/>
</dbReference>
<dbReference type="SMART" id="SM00382">
    <property type="entry name" value="AAA"/>
    <property type="match status" value="1"/>
</dbReference>
<dbReference type="SMART" id="SM00464">
    <property type="entry name" value="LON"/>
    <property type="match status" value="1"/>
</dbReference>
<dbReference type="SUPFAM" id="SSF52540">
    <property type="entry name" value="P-loop containing nucleoside triphosphate hydrolases"/>
    <property type="match status" value="1"/>
</dbReference>
<dbReference type="SUPFAM" id="SSF88697">
    <property type="entry name" value="PUA domain-like"/>
    <property type="match status" value="1"/>
</dbReference>
<dbReference type="SUPFAM" id="SSF54211">
    <property type="entry name" value="Ribosomal protein S5 domain 2-like"/>
    <property type="match status" value="1"/>
</dbReference>
<dbReference type="PROSITE" id="PS51787">
    <property type="entry name" value="LON_N"/>
    <property type="match status" value="1"/>
</dbReference>
<dbReference type="PROSITE" id="PS51786">
    <property type="entry name" value="LON_PROTEOLYTIC"/>
    <property type="match status" value="1"/>
</dbReference>
<dbReference type="PROSITE" id="PS01046">
    <property type="entry name" value="LON_SER"/>
    <property type="match status" value="1"/>
</dbReference>
<feature type="chain" id="PRO_0000396548" description="Lon protease">
    <location>
        <begin position="1"/>
        <end position="787"/>
    </location>
</feature>
<feature type="domain" description="Lon N-terminal" evidence="3">
    <location>
        <begin position="12"/>
        <end position="210"/>
    </location>
</feature>
<feature type="domain" description="Lon proteolytic" evidence="2">
    <location>
        <begin position="599"/>
        <end position="780"/>
    </location>
</feature>
<feature type="active site" evidence="1">
    <location>
        <position position="686"/>
    </location>
</feature>
<feature type="active site" evidence="1">
    <location>
        <position position="729"/>
    </location>
</feature>
<feature type="binding site" evidence="1">
    <location>
        <begin position="362"/>
        <end position="369"/>
    </location>
    <ligand>
        <name>ATP</name>
        <dbReference type="ChEBI" id="CHEBI:30616"/>
    </ligand>
</feature>
<name>LON_CLOD6</name>
<reference key="1">
    <citation type="journal article" date="2006" name="Nat. Genet.">
        <title>The multidrug-resistant human pathogen Clostridium difficile has a highly mobile, mosaic genome.</title>
        <authorList>
            <person name="Sebaihia M."/>
            <person name="Wren B.W."/>
            <person name="Mullany P."/>
            <person name="Fairweather N.F."/>
            <person name="Minton N."/>
            <person name="Stabler R."/>
            <person name="Thomson N.R."/>
            <person name="Roberts A.P."/>
            <person name="Cerdeno-Tarraga A.M."/>
            <person name="Wang H."/>
            <person name="Holden M.T.G."/>
            <person name="Wright A."/>
            <person name="Churcher C."/>
            <person name="Quail M.A."/>
            <person name="Baker S."/>
            <person name="Bason N."/>
            <person name="Brooks K."/>
            <person name="Chillingworth T."/>
            <person name="Cronin A."/>
            <person name="Davis P."/>
            <person name="Dowd L."/>
            <person name="Fraser A."/>
            <person name="Feltwell T."/>
            <person name="Hance Z."/>
            <person name="Holroyd S."/>
            <person name="Jagels K."/>
            <person name="Moule S."/>
            <person name="Mungall K."/>
            <person name="Price C."/>
            <person name="Rabbinowitsch E."/>
            <person name="Sharp S."/>
            <person name="Simmonds M."/>
            <person name="Stevens K."/>
            <person name="Unwin L."/>
            <person name="Whithead S."/>
            <person name="Dupuy B."/>
            <person name="Dougan G."/>
            <person name="Barrell B."/>
            <person name="Parkhill J."/>
        </authorList>
    </citation>
    <scope>NUCLEOTIDE SEQUENCE [LARGE SCALE GENOMIC DNA]</scope>
    <source>
        <strain>630</strain>
    </source>
</reference>